<keyword id="KW-0240">DNA-directed RNA polymerase</keyword>
<keyword id="KW-0548">Nucleotidyltransferase</keyword>
<keyword id="KW-0804">Transcription</keyword>
<keyword id="KW-0808">Transferase</keyword>
<accession>A0M3Y9</accession>
<comment type="function">
    <text evidence="1">DNA-dependent RNA polymerase catalyzes the transcription of DNA into RNA using the four ribonucleoside triphosphates as substrates.</text>
</comment>
<comment type="catalytic activity">
    <reaction evidence="1">
        <text>RNA(n) + a ribonucleoside 5'-triphosphate = RNA(n+1) + diphosphate</text>
        <dbReference type="Rhea" id="RHEA:21248"/>
        <dbReference type="Rhea" id="RHEA-COMP:14527"/>
        <dbReference type="Rhea" id="RHEA-COMP:17342"/>
        <dbReference type="ChEBI" id="CHEBI:33019"/>
        <dbReference type="ChEBI" id="CHEBI:61557"/>
        <dbReference type="ChEBI" id="CHEBI:140395"/>
        <dbReference type="EC" id="2.7.7.6"/>
    </reaction>
</comment>
<comment type="subunit">
    <text evidence="1">The RNAP catalytic core consists of 2 alpha, 1 beta, 1 beta' and 1 omega subunit. When a sigma factor is associated with the core the holoenzyme is formed, which can initiate transcription.</text>
</comment>
<comment type="similarity">
    <text evidence="1">Belongs to the RNA polymerase beta chain family.</text>
</comment>
<name>RPOB_CHRFK</name>
<sequence length="1270" mass="142739">MLAKQTERLSFSSVKNKPAYPDFLDLQIKSFQDFFQLETKSEERGNEGLYNTFLENFPITDTRNQFVLEFLDYFVDPPRYSIQECIERGLTYSVPLKARLKLYCTDPEHEDFETIVQDVYLGTIPYMTPSGTFCINGAERVVVSQLHRSPGVFFGQSFHANGTKLYSARVIPFKGSWIEFATDINSVMYAYIDRKKKLPVTTLFRAIGFERDKDILEIFDLAEEVKVSKTGLKKYLGRKLAARVLNTWYEDFVDEDTGEVVSIERNEIVLDRDTELEKDHIEEILETGSKTILLHKEDNQTGDYAIIHNTLQKDPTNSEKEAVEHIYRQLRNAEPPDEETARGIIDKLFFSDQRYSLGEVGRYRMNKKLGLDVEMDKQVLTKLDIITIVKYLIELINSKAEIDDIDHLSNRRVRTVGEQLSQQFGVGLARMARTIRERMNVRDNEVFTPIDLINAKTLSSVINSFFGTNQLSQFMDQTNPLAEITHKRRLSALGPGGLSRERAGFEVRDVHYTHYGRLCPIETPEGPNIGLISSLSVYAKVNGMGFIETPYRSVTDGKINTSEEPIYLSAEEEEGKKIAQANIPLKDDGTIDTDRVIARMEGDFPVVDPKEIHYTDVAPNQISSISASLIPFLEHDDANRALMGSNMMRQAVPLLRTDSPIVGTGLERQVATDSRVLINAEGEGEVEYVDANKIVIKYDRTEEERMVSFDDDSKSYNLIKFRKTNQGSCINLKPIISVGDRVTKGQVLCQGYATEAGELALGRNMKVAFMPWKGYNFEDAIVISEKVVRDDIFTSIHIDEYSLEVRDTKLGNEELTNDIPNVSEEATKDLDEHGMIRVGAEVKPGDILIGKITPKGESDPTPEEKLLRAIFGDKAGDVKDASLKASPSLSGVVINKKLFARAIKDKRKRAQDKEDVAALEKKYDAKFANLKADLVEKLFTIIGGKTAQGVQNDLGEEVMPKGKKYTLKMLNAVDDYTHLTTGTWTTDDHLNELVADLLHNYKIKENDLQGNLRREKFTVSVGDELPSGILKLAKVYIAKKRKLKVGDKMAGRHGNKGIVARIVRQEDMPFLEDGTPVDIVLNPLGVPSRMNIGQIYETVLGWAGQKNGKKYATPIFDGATIEEINDLTDKAGIPRYGHTYLYDGGTGMRFDQRATVGVIYMLKLGHMIDDKMHARSIGPYSLITQQPLGGKAQFGGQRFGEMEVWALEAYGASATLREILTVKSDDVIGRAKTYEAIVKGEPMPEPGLPESFNVLMHELKGLGLDIKLEE</sequence>
<reference key="1">
    <citation type="journal article" date="2006" name="Environ. Microbiol.">
        <title>Whole genome analysis of the marine Bacteroidetes'Gramella forsetii' reveals adaptations to degradation of polymeric organic matter.</title>
        <authorList>
            <person name="Bauer M."/>
            <person name="Kube M."/>
            <person name="Teeling H."/>
            <person name="Richter M."/>
            <person name="Lombardot T."/>
            <person name="Allers E."/>
            <person name="Wuerdemann C.A."/>
            <person name="Quast C."/>
            <person name="Kuhl H."/>
            <person name="Knaust F."/>
            <person name="Woebken D."/>
            <person name="Bischof K."/>
            <person name="Mussmann M."/>
            <person name="Choudhuri J.V."/>
            <person name="Meyer F."/>
            <person name="Reinhardt R."/>
            <person name="Amann R.I."/>
            <person name="Gloeckner F.O."/>
        </authorList>
    </citation>
    <scope>NUCLEOTIDE SEQUENCE [LARGE SCALE GENOMIC DNA]</scope>
    <source>
        <strain>DSM 17595 / CGMCC 1.15422 / KT0803</strain>
    </source>
</reference>
<evidence type="ECO:0000255" key="1">
    <source>
        <dbReference type="HAMAP-Rule" id="MF_01321"/>
    </source>
</evidence>
<organism>
    <name type="scientific">Christiangramia forsetii (strain DSM 17595 / CGMCC 1.15422 / KT0803)</name>
    <name type="common">Gramella forsetii</name>
    <dbReference type="NCBI Taxonomy" id="411154"/>
    <lineage>
        <taxon>Bacteria</taxon>
        <taxon>Pseudomonadati</taxon>
        <taxon>Bacteroidota</taxon>
        <taxon>Flavobacteriia</taxon>
        <taxon>Flavobacteriales</taxon>
        <taxon>Flavobacteriaceae</taxon>
        <taxon>Christiangramia</taxon>
    </lineage>
</organism>
<gene>
    <name evidence="1" type="primary">rpoB</name>
    <name type="ordered locus">GFO_2370</name>
</gene>
<proteinExistence type="inferred from homology"/>
<dbReference type="EC" id="2.7.7.6" evidence="1"/>
<dbReference type="EMBL" id="CU207366">
    <property type="protein sequence ID" value="CAL67334.1"/>
    <property type="molecule type" value="Genomic_DNA"/>
</dbReference>
<dbReference type="RefSeq" id="WP_011710237.1">
    <property type="nucleotide sequence ID" value="NC_008571.1"/>
</dbReference>
<dbReference type="SMR" id="A0M3Y9"/>
<dbReference type="STRING" id="411154.GFO_2370"/>
<dbReference type="KEGG" id="gfo:GFO_2370"/>
<dbReference type="eggNOG" id="COG0085">
    <property type="taxonomic scope" value="Bacteria"/>
</dbReference>
<dbReference type="HOGENOM" id="CLU_000524_4_1_10"/>
<dbReference type="OrthoDB" id="9803954at2"/>
<dbReference type="Proteomes" id="UP000000755">
    <property type="component" value="Chromosome"/>
</dbReference>
<dbReference type="GO" id="GO:0000428">
    <property type="term" value="C:DNA-directed RNA polymerase complex"/>
    <property type="evidence" value="ECO:0007669"/>
    <property type="project" value="UniProtKB-KW"/>
</dbReference>
<dbReference type="GO" id="GO:0003677">
    <property type="term" value="F:DNA binding"/>
    <property type="evidence" value="ECO:0007669"/>
    <property type="project" value="UniProtKB-UniRule"/>
</dbReference>
<dbReference type="GO" id="GO:0003899">
    <property type="term" value="F:DNA-directed RNA polymerase activity"/>
    <property type="evidence" value="ECO:0007669"/>
    <property type="project" value="UniProtKB-UniRule"/>
</dbReference>
<dbReference type="GO" id="GO:0032549">
    <property type="term" value="F:ribonucleoside binding"/>
    <property type="evidence" value="ECO:0007669"/>
    <property type="project" value="InterPro"/>
</dbReference>
<dbReference type="GO" id="GO:0006351">
    <property type="term" value="P:DNA-templated transcription"/>
    <property type="evidence" value="ECO:0007669"/>
    <property type="project" value="UniProtKB-UniRule"/>
</dbReference>
<dbReference type="CDD" id="cd00653">
    <property type="entry name" value="RNA_pol_B_RPB2"/>
    <property type="match status" value="1"/>
</dbReference>
<dbReference type="Gene3D" id="2.40.50.100">
    <property type="match status" value="1"/>
</dbReference>
<dbReference type="Gene3D" id="2.40.50.150">
    <property type="match status" value="1"/>
</dbReference>
<dbReference type="Gene3D" id="3.90.1100.10">
    <property type="match status" value="2"/>
</dbReference>
<dbReference type="Gene3D" id="2.30.150.10">
    <property type="entry name" value="DNA-directed RNA polymerase, beta subunit, external 1 domain"/>
    <property type="match status" value="1"/>
</dbReference>
<dbReference type="Gene3D" id="2.40.270.10">
    <property type="entry name" value="DNA-directed RNA polymerase, subunit 2, domain 6"/>
    <property type="match status" value="3"/>
</dbReference>
<dbReference type="Gene3D" id="3.90.1800.10">
    <property type="entry name" value="RNA polymerase alpha subunit dimerisation domain"/>
    <property type="match status" value="1"/>
</dbReference>
<dbReference type="Gene3D" id="3.90.1110.10">
    <property type="entry name" value="RNA polymerase Rpb2, domain 2"/>
    <property type="match status" value="2"/>
</dbReference>
<dbReference type="HAMAP" id="MF_01321">
    <property type="entry name" value="RNApol_bact_RpoB"/>
    <property type="match status" value="1"/>
</dbReference>
<dbReference type="InterPro" id="IPR042107">
    <property type="entry name" value="DNA-dir_RNA_pol_bsu_ext_1_sf"/>
</dbReference>
<dbReference type="InterPro" id="IPR019462">
    <property type="entry name" value="DNA-dir_RNA_pol_bsu_external_1"/>
</dbReference>
<dbReference type="InterPro" id="IPR015712">
    <property type="entry name" value="DNA-dir_RNA_pol_su2"/>
</dbReference>
<dbReference type="InterPro" id="IPR007120">
    <property type="entry name" value="DNA-dir_RNAP_su2_dom"/>
</dbReference>
<dbReference type="InterPro" id="IPR037033">
    <property type="entry name" value="DNA-dir_RNAP_su2_hyb_sf"/>
</dbReference>
<dbReference type="InterPro" id="IPR010243">
    <property type="entry name" value="RNA_pol_bsu_bac"/>
</dbReference>
<dbReference type="InterPro" id="IPR007121">
    <property type="entry name" value="RNA_pol_bsu_CS"/>
</dbReference>
<dbReference type="InterPro" id="IPR007644">
    <property type="entry name" value="RNA_pol_bsu_protrusion"/>
</dbReference>
<dbReference type="InterPro" id="IPR007642">
    <property type="entry name" value="RNA_pol_Rpb2_2"/>
</dbReference>
<dbReference type="InterPro" id="IPR037034">
    <property type="entry name" value="RNA_pol_Rpb2_2_sf"/>
</dbReference>
<dbReference type="InterPro" id="IPR007645">
    <property type="entry name" value="RNA_pol_Rpb2_3"/>
</dbReference>
<dbReference type="InterPro" id="IPR007641">
    <property type="entry name" value="RNA_pol_Rpb2_7"/>
</dbReference>
<dbReference type="InterPro" id="IPR014724">
    <property type="entry name" value="RNA_pol_RPB2_OB-fold"/>
</dbReference>
<dbReference type="NCBIfam" id="NF001616">
    <property type="entry name" value="PRK00405.1"/>
    <property type="match status" value="1"/>
</dbReference>
<dbReference type="NCBIfam" id="TIGR02013">
    <property type="entry name" value="rpoB"/>
    <property type="match status" value="1"/>
</dbReference>
<dbReference type="PANTHER" id="PTHR20856">
    <property type="entry name" value="DNA-DIRECTED RNA POLYMERASE I SUBUNIT 2"/>
    <property type="match status" value="1"/>
</dbReference>
<dbReference type="Pfam" id="PF04563">
    <property type="entry name" value="RNA_pol_Rpb2_1"/>
    <property type="match status" value="1"/>
</dbReference>
<dbReference type="Pfam" id="PF04561">
    <property type="entry name" value="RNA_pol_Rpb2_2"/>
    <property type="match status" value="2"/>
</dbReference>
<dbReference type="Pfam" id="PF04565">
    <property type="entry name" value="RNA_pol_Rpb2_3"/>
    <property type="match status" value="1"/>
</dbReference>
<dbReference type="Pfam" id="PF10385">
    <property type="entry name" value="RNA_pol_Rpb2_45"/>
    <property type="match status" value="1"/>
</dbReference>
<dbReference type="Pfam" id="PF00562">
    <property type="entry name" value="RNA_pol_Rpb2_6"/>
    <property type="match status" value="1"/>
</dbReference>
<dbReference type="Pfam" id="PF04560">
    <property type="entry name" value="RNA_pol_Rpb2_7"/>
    <property type="match status" value="1"/>
</dbReference>
<dbReference type="SUPFAM" id="SSF64484">
    <property type="entry name" value="beta and beta-prime subunits of DNA dependent RNA-polymerase"/>
    <property type="match status" value="1"/>
</dbReference>
<dbReference type="PROSITE" id="PS01166">
    <property type="entry name" value="RNA_POL_BETA"/>
    <property type="match status" value="1"/>
</dbReference>
<feature type="chain" id="PRO_0000300322" description="DNA-directed RNA polymerase subunit beta">
    <location>
        <begin position="1"/>
        <end position="1270"/>
    </location>
</feature>
<protein>
    <recommendedName>
        <fullName evidence="1">DNA-directed RNA polymerase subunit beta</fullName>
        <shortName evidence="1">RNAP subunit beta</shortName>
        <ecNumber evidence="1">2.7.7.6</ecNumber>
    </recommendedName>
    <alternativeName>
        <fullName evidence="1">RNA polymerase subunit beta</fullName>
    </alternativeName>
    <alternativeName>
        <fullName evidence="1">Transcriptase subunit beta</fullName>
    </alternativeName>
</protein>